<reference key="1">
    <citation type="journal article" date="2006" name="PLoS Biol.">
        <title>Metabolic complementarity and genomics of the dual bacterial symbiosis of sharpshooters.</title>
        <authorList>
            <person name="Wu D."/>
            <person name="Daugherty S.C."/>
            <person name="Van Aken S.E."/>
            <person name="Pai G.H."/>
            <person name="Watkins K.L."/>
            <person name="Khouri H."/>
            <person name="Tallon L.J."/>
            <person name="Zaborsky J.M."/>
            <person name="Dunbar H.E."/>
            <person name="Tran P.L."/>
            <person name="Moran N.A."/>
            <person name="Eisen J.A."/>
        </authorList>
    </citation>
    <scope>NUCLEOTIDE SEQUENCE [LARGE SCALE GENOMIC DNA]</scope>
</reference>
<keyword id="KW-0963">Cytoplasm</keyword>
<keyword id="KW-0489">Methyltransferase</keyword>
<keyword id="KW-1185">Reference proteome</keyword>
<keyword id="KW-0698">rRNA processing</keyword>
<keyword id="KW-0949">S-adenosyl-L-methionine</keyword>
<keyword id="KW-0808">Transferase</keyword>
<evidence type="ECO:0000255" key="1">
    <source>
        <dbReference type="HAMAP-Rule" id="MF_01547"/>
    </source>
</evidence>
<sequence>MCAKKRSASSNRWLQESLKDKYVVQAQKKGLRSRAWFKLDQIQKSDRLFQPYMTIIDLGAAPGSWSQYVTTQIGKNGHVIACDLRYMSPLSGVDFIQGDFCNKQVLQAILQRLENKKAQVILSDMSPNFSGKPEIDIPKSMYLVEKALKMCRYLLIPGGTFIVKVFQGDGFYEYICSMHALFNTVKIIKPDASRSRSREVYLIAKGHKI</sequence>
<feature type="chain" id="PRO_0000282727" description="Ribosomal RNA large subunit methyltransferase E">
    <location>
        <begin position="1"/>
        <end position="209"/>
    </location>
</feature>
<feature type="active site" description="Proton acceptor" evidence="1">
    <location>
        <position position="164"/>
    </location>
</feature>
<feature type="binding site" evidence="1">
    <location>
        <position position="63"/>
    </location>
    <ligand>
        <name>S-adenosyl-L-methionine</name>
        <dbReference type="ChEBI" id="CHEBI:59789"/>
    </ligand>
</feature>
<feature type="binding site" evidence="1">
    <location>
        <position position="65"/>
    </location>
    <ligand>
        <name>S-adenosyl-L-methionine</name>
        <dbReference type="ChEBI" id="CHEBI:59789"/>
    </ligand>
</feature>
<feature type="binding site" evidence="1">
    <location>
        <position position="83"/>
    </location>
    <ligand>
        <name>S-adenosyl-L-methionine</name>
        <dbReference type="ChEBI" id="CHEBI:59789"/>
    </ligand>
</feature>
<feature type="binding site" evidence="1">
    <location>
        <position position="99"/>
    </location>
    <ligand>
        <name>S-adenosyl-L-methionine</name>
        <dbReference type="ChEBI" id="CHEBI:59789"/>
    </ligand>
</feature>
<feature type="binding site" evidence="1">
    <location>
        <position position="124"/>
    </location>
    <ligand>
        <name>S-adenosyl-L-methionine</name>
        <dbReference type="ChEBI" id="CHEBI:59789"/>
    </ligand>
</feature>
<proteinExistence type="inferred from homology"/>
<comment type="function">
    <text evidence="1">Specifically methylates the uridine in position 2552 of 23S rRNA at the 2'-O position of the ribose in the fully assembled 50S ribosomal subunit.</text>
</comment>
<comment type="catalytic activity">
    <reaction evidence="1">
        <text>uridine(2552) in 23S rRNA + S-adenosyl-L-methionine = 2'-O-methyluridine(2552) in 23S rRNA + S-adenosyl-L-homocysteine + H(+)</text>
        <dbReference type="Rhea" id="RHEA:42720"/>
        <dbReference type="Rhea" id="RHEA-COMP:10202"/>
        <dbReference type="Rhea" id="RHEA-COMP:10203"/>
        <dbReference type="ChEBI" id="CHEBI:15378"/>
        <dbReference type="ChEBI" id="CHEBI:57856"/>
        <dbReference type="ChEBI" id="CHEBI:59789"/>
        <dbReference type="ChEBI" id="CHEBI:65315"/>
        <dbReference type="ChEBI" id="CHEBI:74478"/>
        <dbReference type="EC" id="2.1.1.166"/>
    </reaction>
</comment>
<comment type="subcellular location">
    <subcellularLocation>
        <location evidence="1">Cytoplasm</location>
    </subcellularLocation>
</comment>
<comment type="similarity">
    <text evidence="1">Belongs to the class I-like SAM-binding methyltransferase superfamily. RNA methyltransferase RlmE family.</text>
</comment>
<organism>
    <name type="scientific">Baumannia cicadellinicola subsp. Homalodisca coagulata</name>
    <dbReference type="NCBI Taxonomy" id="374463"/>
    <lineage>
        <taxon>Bacteria</taxon>
        <taxon>Pseudomonadati</taxon>
        <taxon>Pseudomonadota</taxon>
        <taxon>Gammaproteobacteria</taxon>
        <taxon>Candidatus Palibaumannia</taxon>
    </lineage>
</organism>
<accession>Q1LSK2</accession>
<name>RLME_BAUCH</name>
<dbReference type="EC" id="2.1.1.166" evidence="1"/>
<dbReference type="EMBL" id="CP000238">
    <property type="protein sequence ID" value="ABF14081.1"/>
    <property type="molecule type" value="Genomic_DNA"/>
</dbReference>
<dbReference type="RefSeq" id="WP_011520795.1">
    <property type="nucleotide sequence ID" value="NC_007984.1"/>
</dbReference>
<dbReference type="SMR" id="Q1LSK2"/>
<dbReference type="STRING" id="374463.BCI_0639"/>
<dbReference type="KEGG" id="bci:BCI_0639"/>
<dbReference type="HOGENOM" id="CLU_009422_4_0_6"/>
<dbReference type="OrthoDB" id="9790080at2"/>
<dbReference type="Proteomes" id="UP000002427">
    <property type="component" value="Chromosome"/>
</dbReference>
<dbReference type="GO" id="GO:0005737">
    <property type="term" value="C:cytoplasm"/>
    <property type="evidence" value="ECO:0007669"/>
    <property type="project" value="UniProtKB-SubCell"/>
</dbReference>
<dbReference type="GO" id="GO:0008650">
    <property type="term" value="F:rRNA (uridine-2'-O-)-methyltransferase activity"/>
    <property type="evidence" value="ECO:0007669"/>
    <property type="project" value="UniProtKB-UniRule"/>
</dbReference>
<dbReference type="FunFam" id="3.40.50.150:FF:000005">
    <property type="entry name" value="Ribosomal RNA large subunit methyltransferase E"/>
    <property type="match status" value="1"/>
</dbReference>
<dbReference type="Gene3D" id="3.40.50.150">
    <property type="entry name" value="Vaccinia Virus protein VP39"/>
    <property type="match status" value="1"/>
</dbReference>
<dbReference type="HAMAP" id="MF_01547">
    <property type="entry name" value="RNA_methyltr_E"/>
    <property type="match status" value="1"/>
</dbReference>
<dbReference type="InterPro" id="IPR050082">
    <property type="entry name" value="RNA_methyltr_RlmE"/>
</dbReference>
<dbReference type="InterPro" id="IPR002877">
    <property type="entry name" value="RNA_MeTrfase_FtsJ_dom"/>
</dbReference>
<dbReference type="InterPro" id="IPR015507">
    <property type="entry name" value="rRNA-MeTfrase_E"/>
</dbReference>
<dbReference type="InterPro" id="IPR029063">
    <property type="entry name" value="SAM-dependent_MTases_sf"/>
</dbReference>
<dbReference type="NCBIfam" id="NF008390">
    <property type="entry name" value="PRK11188.1"/>
    <property type="match status" value="1"/>
</dbReference>
<dbReference type="PANTHER" id="PTHR10920">
    <property type="entry name" value="RIBOSOMAL RNA METHYLTRANSFERASE"/>
    <property type="match status" value="1"/>
</dbReference>
<dbReference type="PANTHER" id="PTHR10920:SF18">
    <property type="entry name" value="RRNA METHYLTRANSFERASE 2, MITOCHONDRIAL"/>
    <property type="match status" value="1"/>
</dbReference>
<dbReference type="Pfam" id="PF01728">
    <property type="entry name" value="FtsJ"/>
    <property type="match status" value="1"/>
</dbReference>
<dbReference type="PIRSF" id="PIRSF005461">
    <property type="entry name" value="23S_rRNA_mtase"/>
    <property type="match status" value="1"/>
</dbReference>
<dbReference type="SUPFAM" id="SSF53335">
    <property type="entry name" value="S-adenosyl-L-methionine-dependent methyltransferases"/>
    <property type="match status" value="1"/>
</dbReference>
<protein>
    <recommendedName>
        <fullName evidence="1">Ribosomal RNA large subunit methyltransferase E</fullName>
        <ecNumber evidence="1">2.1.1.166</ecNumber>
    </recommendedName>
    <alternativeName>
        <fullName evidence="1">23S rRNA Um2552 methyltransferase</fullName>
    </alternativeName>
    <alternativeName>
        <fullName evidence="1">rRNA (uridine-2'-O-)-methyltransferase</fullName>
    </alternativeName>
</protein>
<gene>
    <name evidence="1" type="primary">rlmE</name>
    <name evidence="1" type="synonym">ftsJ</name>
    <name evidence="1" type="synonym">rrmJ</name>
    <name type="ordered locus">BCI_0639</name>
</gene>